<sequence length="293" mass="31938">MTDSTRSLRNCLAPAKLNLFLHITGRRPNGYHDLQSVFQLLNWGDTLHFTLRDDGRVARVTDVPGVPEESDLVVRAANLLKAHTGTAHGVDIEIDKCLPMGAGLGGGSSDAATTLLALNRLWQLDLPRAELQSLAVKLGADVPFFIFGKNAFAEGIGEELAEVQLPTRWFLVVTPRVHVPTAEIFSDELLTRDSKRVTITDFLAQQNSDAGWPDSFGRNDMQQVVTSKYAEVAQVVKWLYDVTPARMTGSGASVFAAFRSKHEAEAAQAKLPTGWNGAVAESLNEHPLFAFAS</sequence>
<proteinExistence type="inferred from homology"/>
<protein>
    <recommendedName>
        <fullName evidence="1">4-diphosphocytidyl-2-C-methyl-D-erythritol kinase</fullName>
        <shortName evidence="1">CMK</shortName>
        <ecNumber evidence="1">2.7.1.148</ecNumber>
    </recommendedName>
    <alternativeName>
        <fullName evidence="1">4-(cytidine-5'-diphospho)-2-C-methyl-D-erythritol kinase</fullName>
    </alternativeName>
</protein>
<reference key="1">
    <citation type="submission" date="2005-10" db="EMBL/GenBank/DDBJ databases">
        <title>Complete sequence of chromosome 1 of Burkholderia sp. 383.</title>
        <authorList>
            <consortium name="US DOE Joint Genome Institute"/>
            <person name="Copeland A."/>
            <person name="Lucas S."/>
            <person name="Lapidus A."/>
            <person name="Barry K."/>
            <person name="Detter J.C."/>
            <person name="Glavina T."/>
            <person name="Hammon N."/>
            <person name="Israni S."/>
            <person name="Pitluck S."/>
            <person name="Chain P."/>
            <person name="Malfatti S."/>
            <person name="Shin M."/>
            <person name="Vergez L."/>
            <person name="Schmutz J."/>
            <person name="Larimer F."/>
            <person name="Land M."/>
            <person name="Kyrpides N."/>
            <person name="Lykidis A."/>
            <person name="Richardson P."/>
        </authorList>
    </citation>
    <scope>NUCLEOTIDE SEQUENCE [LARGE SCALE GENOMIC DNA]</scope>
    <source>
        <strain>ATCC 17760 / DSM 23089 / LMG 22485 / NCIMB 9086 / R18194 / 383</strain>
    </source>
</reference>
<gene>
    <name evidence="1" type="primary">ispE</name>
    <name type="ordered locus">Bcep18194_A6131</name>
</gene>
<dbReference type="EC" id="2.7.1.148" evidence="1"/>
<dbReference type="EMBL" id="CP000151">
    <property type="protein sequence ID" value="ABB09725.1"/>
    <property type="molecule type" value="Genomic_DNA"/>
</dbReference>
<dbReference type="RefSeq" id="WP_011353234.1">
    <property type="nucleotide sequence ID" value="NC_007510.1"/>
</dbReference>
<dbReference type="SMR" id="Q39CU1"/>
<dbReference type="GeneID" id="45096012"/>
<dbReference type="KEGG" id="bur:Bcep18194_A6131"/>
<dbReference type="PATRIC" id="fig|482957.22.peg.3136"/>
<dbReference type="HOGENOM" id="CLU_053057_3_0_4"/>
<dbReference type="UniPathway" id="UPA00056">
    <property type="reaction ID" value="UER00094"/>
</dbReference>
<dbReference type="Proteomes" id="UP000002705">
    <property type="component" value="Chromosome 1"/>
</dbReference>
<dbReference type="GO" id="GO:0050515">
    <property type="term" value="F:4-(cytidine 5'-diphospho)-2-C-methyl-D-erythritol kinase activity"/>
    <property type="evidence" value="ECO:0007669"/>
    <property type="project" value="UniProtKB-UniRule"/>
</dbReference>
<dbReference type="GO" id="GO:0005524">
    <property type="term" value="F:ATP binding"/>
    <property type="evidence" value="ECO:0007669"/>
    <property type="project" value="UniProtKB-UniRule"/>
</dbReference>
<dbReference type="GO" id="GO:0019288">
    <property type="term" value="P:isopentenyl diphosphate biosynthetic process, methylerythritol 4-phosphate pathway"/>
    <property type="evidence" value="ECO:0007669"/>
    <property type="project" value="UniProtKB-UniRule"/>
</dbReference>
<dbReference type="GO" id="GO:0016114">
    <property type="term" value="P:terpenoid biosynthetic process"/>
    <property type="evidence" value="ECO:0007669"/>
    <property type="project" value="InterPro"/>
</dbReference>
<dbReference type="Gene3D" id="3.30.230.10">
    <property type="match status" value="1"/>
</dbReference>
<dbReference type="Gene3D" id="3.30.70.890">
    <property type="entry name" value="GHMP kinase, C-terminal domain"/>
    <property type="match status" value="1"/>
</dbReference>
<dbReference type="HAMAP" id="MF_00061">
    <property type="entry name" value="IspE"/>
    <property type="match status" value="1"/>
</dbReference>
<dbReference type="InterPro" id="IPR013750">
    <property type="entry name" value="GHMP_kinase_C_dom"/>
</dbReference>
<dbReference type="InterPro" id="IPR036554">
    <property type="entry name" value="GHMP_kinase_C_sf"/>
</dbReference>
<dbReference type="InterPro" id="IPR006204">
    <property type="entry name" value="GHMP_kinase_N_dom"/>
</dbReference>
<dbReference type="InterPro" id="IPR004424">
    <property type="entry name" value="IspE"/>
</dbReference>
<dbReference type="InterPro" id="IPR020568">
    <property type="entry name" value="Ribosomal_Su5_D2-typ_SF"/>
</dbReference>
<dbReference type="InterPro" id="IPR014721">
    <property type="entry name" value="Ribsml_uS5_D2-typ_fold_subgr"/>
</dbReference>
<dbReference type="NCBIfam" id="TIGR00154">
    <property type="entry name" value="ispE"/>
    <property type="match status" value="1"/>
</dbReference>
<dbReference type="NCBIfam" id="NF011202">
    <property type="entry name" value="PRK14608.1"/>
    <property type="match status" value="1"/>
</dbReference>
<dbReference type="PANTHER" id="PTHR43527">
    <property type="entry name" value="4-DIPHOSPHOCYTIDYL-2-C-METHYL-D-ERYTHRITOL KINASE, CHLOROPLASTIC"/>
    <property type="match status" value="1"/>
</dbReference>
<dbReference type="PANTHER" id="PTHR43527:SF2">
    <property type="entry name" value="4-DIPHOSPHOCYTIDYL-2-C-METHYL-D-ERYTHRITOL KINASE, CHLOROPLASTIC"/>
    <property type="match status" value="1"/>
</dbReference>
<dbReference type="Pfam" id="PF08544">
    <property type="entry name" value="GHMP_kinases_C"/>
    <property type="match status" value="1"/>
</dbReference>
<dbReference type="Pfam" id="PF00288">
    <property type="entry name" value="GHMP_kinases_N"/>
    <property type="match status" value="1"/>
</dbReference>
<dbReference type="PIRSF" id="PIRSF010376">
    <property type="entry name" value="IspE"/>
    <property type="match status" value="1"/>
</dbReference>
<dbReference type="SUPFAM" id="SSF55060">
    <property type="entry name" value="GHMP Kinase, C-terminal domain"/>
    <property type="match status" value="1"/>
</dbReference>
<dbReference type="SUPFAM" id="SSF54211">
    <property type="entry name" value="Ribosomal protein S5 domain 2-like"/>
    <property type="match status" value="1"/>
</dbReference>
<organism>
    <name type="scientific">Burkholderia lata (strain ATCC 17760 / DSM 23089 / LMG 22485 / NCIMB 9086 / R18194 / 383)</name>
    <dbReference type="NCBI Taxonomy" id="482957"/>
    <lineage>
        <taxon>Bacteria</taxon>
        <taxon>Pseudomonadati</taxon>
        <taxon>Pseudomonadota</taxon>
        <taxon>Betaproteobacteria</taxon>
        <taxon>Burkholderiales</taxon>
        <taxon>Burkholderiaceae</taxon>
        <taxon>Burkholderia</taxon>
        <taxon>Burkholderia cepacia complex</taxon>
    </lineage>
</organism>
<name>ISPE_BURL3</name>
<accession>Q39CU1</accession>
<comment type="function">
    <text evidence="1">Catalyzes the phosphorylation of the position 2 hydroxy group of 4-diphosphocytidyl-2C-methyl-D-erythritol.</text>
</comment>
<comment type="catalytic activity">
    <reaction evidence="1">
        <text>4-CDP-2-C-methyl-D-erythritol + ATP = 4-CDP-2-C-methyl-D-erythritol 2-phosphate + ADP + H(+)</text>
        <dbReference type="Rhea" id="RHEA:18437"/>
        <dbReference type="ChEBI" id="CHEBI:15378"/>
        <dbReference type="ChEBI" id="CHEBI:30616"/>
        <dbReference type="ChEBI" id="CHEBI:57823"/>
        <dbReference type="ChEBI" id="CHEBI:57919"/>
        <dbReference type="ChEBI" id="CHEBI:456216"/>
        <dbReference type="EC" id="2.7.1.148"/>
    </reaction>
</comment>
<comment type="pathway">
    <text evidence="1">Isoprenoid biosynthesis; isopentenyl diphosphate biosynthesis via DXP pathway; isopentenyl diphosphate from 1-deoxy-D-xylulose 5-phosphate: step 3/6.</text>
</comment>
<comment type="similarity">
    <text evidence="1">Belongs to the GHMP kinase family. IspE subfamily.</text>
</comment>
<evidence type="ECO:0000255" key="1">
    <source>
        <dbReference type="HAMAP-Rule" id="MF_00061"/>
    </source>
</evidence>
<keyword id="KW-0067">ATP-binding</keyword>
<keyword id="KW-0414">Isoprene biosynthesis</keyword>
<keyword id="KW-0418">Kinase</keyword>
<keyword id="KW-0547">Nucleotide-binding</keyword>
<keyword id="KW-0808">Transferase</keyword>
<feature type="chain" id="PRO_0000235076" description="4-diphosphocytidyl-2-C-methyl-D-erythritol kinase">
    <location>
        <begin position="1"/>
        <end position="293"/>
    </location>
</feature>
<feature type="active site" evidence="1">
    <location>
        <position position="16"/>
    </location>
</feature>
<feature type="active site" evidence="1">
    <location>
        <position position="141"/>
    </location>
</feature>
<feature type="binding site" evidence="1">
    <location>
        <begin position="99"/>
        <end position="109"/>
    </location>
    <ligand>
        <name>ATP</name>
        <dbReference type="ChEBI" id="CHEBI:30616"/>
    </ligand>
</feature>